<comment type="function">
    <text evidence="1">Positively regulates the activity of the minus-end directed microtubule motor protein dynein. May enhance dynein-mediated microtubule sliding by targeting dynein to the microtubule plus end. Required for several dynein- and microtubule-dependent processes.</text>
</comment>
<comment type="subcellular location">
    <subcellularLocation>
        <location evidence="1">Cytoplasm</location>
        <location evidence="1">Cytoskeleton</location>
    </subcellularLocation>
    <subcellularLocation>
        <location evidence="1">Cytoplasm</location>
        <location evidence="1">Cytoskeleton</location>
        <location evidence="1">Microtubule organizing center</location>
        <location evidence="1">Centrosome</location>
    </subcellularLocation>
    <text evidence="1">Localizes to the plus end of microtubules and to the centrosome.</text>
</comment>
<comment type="domain">
    <text evidence="1">Dimerization mediated by the LisH domain may be required to activate dynein.</text>
</comment>
<comment type="similarity">
    <text evidence="1">Belongs to the WD repeat LIS1/nudF family.</text>
</comment>
<feature type="chain" id="PRO_0000405046" description="Lissencephaly-1 homolog">
    <location>
        <begin position="1"/>
        <end position="411"/>
    </location>
</feature>
<feature type="domain" description="LisH" evidence="1">
    <location>
        <begin position="9"/>
        <end position="41"/>
    </location>
</feature>
<feature type="repeat" description="WD 1">
    <location>
        <begin position="106"/>
        <end position="147"/>
    </location>
</feature>
<feature type="repeat" description="WD 2">
    <location>
        <begin position="148"/>
        <end position="187"/>
    </location>
</feature>
<feature type="repeat" description="WD 3">
    <location>
        <begin position="191"/>
        <end position="230"/>
    </location>
</feature>
<feature type="repeat" description="WD 4">
    <location>
        <begin position="233"/>
        <end position="272"/>
    </location>
</feature>
<feature type="repeat" description="WD 5">
    <location>
        <begin position="275"/>
        <end position="334"/>
    </location>
</feature>
<feature type="repeat" description="WD 6">
    <location>
        <begin position="337"/>
        <end position="376"/>
    </location>
</feature>
<feature type="repeat" description="WD 7">
    <location>
        <begin position="379"/>
        <end position="411"/>
    </location>
</feature>
<feature type="coiled-coil region" evidence="1">
    <location>
        <begin position="56"/>
        <end position="83"/>
    </location>
</feature>
<reference key="1">
    <citation type="journal article" date="2007" name="Nature">
        <title>Evolution of genes and genomes on the Drosophila phylogeny.</title>
        <authorList>
            <consortium name="Drosophila 12 genomes consortium"/>
        </authorList>
    </citation>
    <scope>NUCLEOTIDE SEQUENCE [LARGE SCALE GENOMIC DNA]</scope>
    <source>
        <strain>Rob3c / Tucson 14021-0248.25</strain>
    </source>
</reference>
<keyword id="KW-0131">Cell cycle</keyword>
<keyword id="KW-0132">Cell division</keyword>
<keyword id="KW-0175">Coiled coil</keyword>
<keyword id="KW-0963">Cytoplasm</keyword>
<keyword id="KW-0206">Cytoskeleton</keyword>
<keyword id="KW-0493">Microtubule</keyword>
<keyword id="KW-0498">Mitosis</keyword>
<keyword id="KW-1185">Reference proteome</keyword>
<keyword id="KW-0677">Repeat</keyword>
<keyword id="KW-0813">Transport</keyword>
<keyword id="KW-0853">WD repeat</keyword>
<gene>
    <name evidence="1" type="primary">Lis-1</name>
    <name type="ORF">GM21668</name>
</gene>
<dbReference type="EMBL" id="CH480816">
    <property type="protein sequence ID" value="EDW48091.1"/>
    <property type="molecule type" value="Genomic_DNA"/>
</dbReference>
<dbReference type="SMR" id="B4HSL3"/>
<dbReference type="STRING" id="7238.B4HSL3"/>
<dbReference type="EnsemblMetazoa" id="FBtr0204653">
    <property type="protein sequence ID" value="FBpp0203145"/>
    <property type="gene ID" value="FBgn0176548"/>
</dbReference>
<dbReference type="EnsemblMetazoa" id="XM_002034042.2">
    <property type="protein sequence ID" value="XP_002034078.1"/>
    <property type="gene ID" value="LOC6609389"/>
</dbReference>
<dbReference type="GeneID" id="6609389"/>
<dbReference type="KEGG" id="dse:6609389"/>
<dbReference type="CTD" id="36791"/>
<dbReference type="HOGENOM" id="CLU_000288_57_15_1"/>
<dbReference type="OMA" id="WHVATKE"/>
<dbReference type="OrthoDB" id="7025at7215"/>
<dbReference type="PhylomeDB" id="B4HSL3"/>
<dbReference type="Proteomes" id="UP000001292">
    <property type="component" value="Unassembled WGS sequence"/>
</dbReference>
<dbReference type="GO" id="GO:1904115">
    <property type="term" value="C:axon cytoplasm"/>
    <property type="evidence" value="ECO:0007669"/>
    <property type="project" value="GOC"/>
</dbReference>
<dbReference type="GO" id="GO:0005938">
    <property type="term" value="C:cell cortex"/>
    <property type="evidence" value="ECO:0007669"/>
    <property type="project" value="EnsemblMetazoa"/>
</dbReference>
<dbReference type="GO" id="GO:0030425">
    <property type="term" value="C:dendrite"/>
    <property type="evidence" value="ECO:0007669"/>
    <property type="project" value="EnsemblMetazoa"/>
</dbReference>
<dbReference type="GO" id="GO:0005869">
    <property type="term" value="C:dynactin complex"/>
    <property type="evidence" value="ECO:0007669"/>
    <property type="project" value="EnsemblMetazoa"/>
</dbReference>
<dbReference type="GO" id="GO:0030286">
    <property type="term" value="C:dynein complex"/>
    <property type="evidence" value="ECO:0007669"/>
    <property type="project" value="EnsemblMetazoa"/>
</dbReference>
<dbReference type="GO" id="GO:0030426">
    <property type="term" value="C:growth cone"/>
    <property type="evidence" value="ECO:0007669"/>
    <property type="project" value="EnsemblMetazoa"/>
</dbReference>
<dbReference type="GO" id="GO:0000776">
    <property type="term" value="C:kinetochore"/>
    <property type="evidence" value="ECO:0007669"/>
    <property type="project" value="EnsemblMetazoa"/>
</dbReference>
<dbReference type="GO" id="GO:0005828">
    <property type="term" value="C:kinetochore microtubule"/>
    <property type="evidence" value="ECO:0007669"/>
    <property type="project" value="EnsemblMetazoa"/>
</dbReference>
<dbReference type="GO" id="GO:0043025">
    <property type="term" value="C:neuronal cell body"/>
    <property type="evidence" value="ECO:0007669"/>
    <property type="project" value="EnsemblMetazoa"/>
</dbReference>
<dbReference type="GO" id="GO:0031616">
    <property type="term" value="C:spindle pole centrosome"/>
    <property type="evidence" value="ECO:0007669"/>
    <property type="project" value="EnsemblMetazoa"/>
</dbReference>
<dbReference type="GO" id="GO:0070840">
    <property type="term" value="F:dynein complex binding"/>
    <property type="evidence" value="ECO:0007669"/>
    <property type="project" value="UniProtKB-UniRule"/>
</dbReference>
<dbReference type="GO" id="GO:0007298">
    <property type="term" value="P:border follicle cell migration"/>
    <property type="evidence" value="ECO:0007669"/>
    <property type="project" value="EnsemblMetazoa"/>
</dbReference>
<dbReference type="GO" id="GO:0051642">
    <property type="term" value="P:centrosome localization"/>
    <property type="evidence" value="ECO:0007669"/>
    <property type="project" value="EnsemblMetazoa"/>
</dbReference>
<dbReference type="GO" id="GO:0051299">
    <property type="term" value="P:centrosome separation"/>
    <property type="evidence" value="ECO:0007669"/>
    <property type="project" value="EnsemblMetazoa"/>
</dbReference>
<dbReference type="GO" id="GO:0030381">
    <property type="term" value="P:chorion-containing eggshell pattern formation"/>
    <property type="evidence" value="ECO:0007669"/>
    <property type="project" value="EnsemblMetazoa"/>
</dbReference>
<dbReference type="GO" id="GO:0061883">
    <property type="term" value="P:clathrin-dependent endocytosis involved in vitellogenesis"/>
    <property type="evidence" value="ECO:0007669"/>
    <property type="project" value="EnsemblMetazoa"/>
</dbReference>
<dbReference type="GO" id="GO:0048813">
    <property type="term" value="P:dendrite morphogenesis"/>
    <property type="evidence" value="ECO:0007669"/>
    <property type="project" value="EnsemblMetazoa"/>
</dbReference>
<dbReference type="GO" id="GO:0000132">
    <property type="term" value="P:establishment of mitotic spindle orientation"/>
    <property type="evidence" value="ECO:0007669"/>
    <property type="project" value="UniProtKB-UniRule"/>
</dbReference>
<dbReference type="GO" id="GO:0048142">
    <property type="term" value="P:germarium-derived cystoblast division"/>
    <property type="evidence" value="ECO:0007669"/>
    <property type="project" value="EnsemblMetazoa"/>
</dbReference>
<dbReference type="GO" id="GO:0007294">
    <property type="term" value="P:germarium-derived oocyte fate determination"/>
    <property type="evidence" value="ECO:0007669"/>
    <property type="project" value="EnsemblMetazoa"/>
</dbReference>
<dbReference type="GO" id="GO:0008298">
    <property type="term" value="P:intracellular mRNA localization"/>
    <property type="evidence" value="ECO:0007669"/>
    <property type="project" value="EnsemblMetazoa"/>
</dbReference>
<dbReference type="GO" id="GO:0006886">
    <property type="term" value="P:intracellular protein transport"/>
    <property type="evidence" value="ECO:0007669"/>
    <property type="project" value="EnsemblMetazoa"/>
</dbReference>
<dbReference type="GO" id="GO:0051383">
    <property type="term" value="P:kinetochore organization"/>
    <property type="evidence" value="ECO:0007669"/>
    <property type="project" value="EnsemblMetazoa"/>
</dbReference>
<dbReference type="GO" id="GO:0051012">
    <property type="term" value="P:microtubule sliding"/>
    <property type="evidence" value="ECO:0007669"/>
    <property type="project" value="UniProtKB-UniRule"/>
</dbReference>
<dbReference type="GO" id="GO:0046716">
    <property type="term" value="P:muscle cell cellular homeostasis"/>
    <property type="evidence" value="ECO:0007669"/>
    <property type="project" value="EnsemblMetazoa"/>
</dbReference>
<dbReference type="GO" id="GO:0016319">
    <property type="term" value="P:mushroom body development"/>
    <property type="evidence" value="ECO:0007669"/>
    <property type="project" value="EnsemblMetazoa"/>
</dbReference>
<dbReference type="GO" id="GO:0007405">
    <property type="term" value="P:neuroblast proliferation"/>
    <property type="evidence" value="ECO:0007669"/>
    <property type="project" value="EnsemblMetazoa"/>
</dbReference>
<dbReference type="GO" id="GO:0030473">
    <property type="term" value="P:nuclear migration along microtubule"/>
    <property type="evidence" value="ECO:0007669"/>
    <property type="project" value="EnsemblMetazoa"/>
</dbReference>
<dbReference type="GO" id="GO:0007312">
    <property type="term" value="P:oocyte nucleus migration involved in oocyte dorsal/ventral axis specification"/>
    <property type="evidence" value="ECO:0007669"/>
    <property type="project" value="EnsemblMetazoa"/>
</dbReference>
<dbReference type="GO" id="GO:0030723">
    <property type="term" value="P:ovarian fusome organization"/>
    <property type="evidence" value="ECO:0007669"/>
    <property type="project" value="EnsemblMetazoa"/>
</dbReference>
<dbReference type="GO" id="GO:0007300">
    <property type="term" value="P:ovarian nurse cell to oocyte transport"/>
    <property type="evidence" value="ECO:0007669"/>
    <property type="project" value="EnsemblMetazoa"/>
</dbReference>
<dbReference type="GO" id="GO:0072499">
    <property type="term" value="P:photoreceptor cell axon guidance"/>
    <property type="evidence" value="ECO:0007669"/>
    <property type="project" value="EnsemblMetazoa"/>
</dbReference>
<dbReference type="GO" id="GO:0050772">
    <property type="term" value="P:positive regulation of axonogenesis"/>
    <property type="evidence" value="ECO:0007669"/>
    <property type="project" value="EnsemblMetazoa"/>
</dbReference>
<dbReference type="GO" id="GO:0030513">
    <property type="term" value="P:positive regulation of BMP signaling pathway"/>
    <property type="evidence" value="ECO:0007669"/>
    <property type="project" value="EnsemblMetazoa"/>
</dbReference>
<dbReference type="GO" id="GO:0045842">
    <property type="term" value="P:positive regulation of mitotic metaphase/anaphase transition"/>
    <property type="evidence" value="ECO:0007669"/>
    <property type="project" value="EnsemblMetazoa"/>
</dbReference>
<dbReference type="GO" id="GO:0034501">
    <property type="term" value="P:protein localization to kinetochore"/>
    <property type="evidence" value="ECO:0007669"/>
    <property type="project" value="EnsemblMetazoa"/>
</dbReference>
<dbReference type="GO" id="GO:0048814">
    <property type="term" value="P:regulation of dendrite morphogenesis"/>
    <property type="evidence" value="ECO:0007669"/>
    <property type="project" value="EnsemblMetazoa"/>
</dbReference>
<dbReference type="GO" id="GO:0008090">
    <property type="term" value="P:retrograde axonal transport"/>
    <property type="evidence" value="ECO:0007669"/>
    <property type="project" value="EnsemblMetazoa"/>
</dbReference>
<dbReference type="GO" id="GO:0042052">
    <property type="term" value="P:rhabdomere development"/>
    <property type="evidence" value="ECO:0007669"/>
    <property type="project" value="EnsemblMetazoa"/>
</dbReference>
<dbReference type="GO" id="GO:0007283">
    <property type="term" value="P:spermatogenesis"/>
    <property type="evidence" value="ECO:0007669"/>
    <property type="project" value="EnsemblMetazoa"/>
</dbReference>
<dbReference type="GO" id="GO:0051225">
    <property type="term" value="P:spindle assembly"/>
    <property type="evidence" value="ECO:0007669"/>
    <property type="project" value="EnsemblMetazoa"/>
</dbReference>
<dbReference type="GO" id="GO:0019827">
    <property type="term" value="P:stem cell population maintenance"/>
    <property type="evidence" value="ECO:0007669"/>
    <property type="project" value="EnsemblMetazoa"/>
</dbReference>
<dbReference type="CDD" id="cd00200">
    <property type="entry name" value="WD40"/>
    <property type="match status" value="1"/>
</dbReference>
<dbReference type="FunFam" id="2.130.10.10:FF:000038">
    <property type="entry name" value="Lissencephaly-1 homolog B"/>
    <property type="match status" value="1"/>
</dbReference>
<dbReference type="FunFam" id="1.20.960.30:FF:000002">
    <property type="entry name" value="Platelet-activating factor acetylhydrolase ib"/>
    <property type="match status" value="1"/>
</dbReference>
<dbReference type="Gene3D" id="1.20.960.30">
    <property type="match status" value="1"/>
</dbReference>
<dbReference type="Gene3D" id="2.130.10.10">
    <property type="entry name" value="YVTN repeat-like/Quinoprotein amine dehydrogenase"/>
    <property type="match status" value="1"/>
</dbReference>
<dbReference type="HAMAP" id="MF_03141">
    <property type="entry name" value="lis1"/>
    <property type="match status" value="1"/>
</dbReference>
<dbReference type="InterPro" id="IPR017252">
    <property type="entry name" value="Dynein_regulator_LIS1"/>
</dbReference>
<dbReference type="InterPro" id="IPR020472">
    <property type="entry name" value="G-protein_beta_WD-40_rep"/>
</dbReference>
<dbReference type="InterPro" id="IPR037190">
    <property type="entry name" value="LIS1_N"/>
</dbReference>
<dbReference type="InterPro" id="IPR006594">
    <property type="entry name" value="LisH"/>
</dbReference>
<dbReference type="InterPro" id="IPR056795">
    <property type="entry name" value="PAC1-like_LisH-like_dom"/>
</dbReference>
<dbReference type="InterPro" id="IPR015943">
    <property type="entry name" value="WD40/YVTN_repeat-like_dom_sf"/>
</dbReference>
<dbReference type="InterPro" id="IPR019775">
    <property type="entry name" value="WD40_repeat_CS"/>
</dbReference>
<dbReference type="InterPro" id="IPR036322">
    <property type="entry name" value="WD40_repeat_dom_sf"/>
</dbReference>
<dbReference type="InterPro" id="IPR001680">
    <property type="entry name" value="WD40_rpt"/>
</dbReference>
<dbReference type="InterPro" id="IPR050349">
    <property type="entry name" value="WD_LIS1/nudF_dynein_reg"/>
</dbReference>
<dbReference type="PANTHER" id="PTHR44129">
    <property type="entry name" value="WD REPEAT-CONTAINING PROTEIN POP1"/>
    <property type="match status" value="1"/>
</dbReference>
<dbReference type="Pfam" id="PF24951">
    <property type="entry name" value="LisH_PAC1"/>
    <property type="match status" value="1"/>
</dbReference>
<dbReference type="Pfam" id="PF00400">
    <property type="entry name" value="WD40"/>
    <property type="match status" value="7"/>
</dbReference>
<dbReference type="PIRSF" id="PIRSF037647">
    <property type="entry name" value="Dynein_regulator_Lis1"/>
    <property type="match status" value="1"/>
</dbReference>
<dbReference type="PRINTS" id="PR00320">
    <property type="entry name" value="GPROTEINBRPT"/>
</dbReference>
<dbReference type="SMART" id="SM00667">
    <property type="entry name" value="LisH"/>
    <property type="match status" value="1"/>
</dbReference>
<dbReference type="SMART" id="SM00320">
    <property type="entry name" value="WD40"/>
    <property type="match status" value="7"/>
</dbReference>
<dbReference type="SUPFAM" id="SSF109925">
    <property type="entry name" value="Lissencephaly-1 protein (Lis-1, PAF-AH alpha) N-terminal domain"/>
    <property type="match status" value="1"/>
</dbReference>
<dbReference type="SUPFAM" id="SSF50978">
    <property type="entry name" value="WD40 repeat-like"/>
    <property type="match status" value="1"/>
</dbReference>
<dbReference type="PROSITE" id="PS50896">
    <property type="entry name" value="LISH"/>
    <property type="match status" value="1"/>
</dbReference>
<dbReference type="PROSITE" id="PS00678">
    <property type="entry name" value="WD_REPEATS_1"/>
    <property type="match status" value="6"/>
</dbReference>
<dbReference type="PROSITE" id="PS50082">
    <property type="entry name" value="WD_REPEATS_2"/>
    <property type="match status" value="7"/>
</dbReference>
<dbReference type="PROSITE" id="PS50294">
    <property type="entry name" value="WD_REPEATS_REGION"/>
    <property type="match status" value="1"/>
</dbReference>
<name>LIS1_DROSE</name>
<organism>
    <name type="scientific">Drosophila sechellia</name>
    <name type="common">Fruit fly</name>
    <dbReference type="NCBI Taxonomy" id="7238"/>
    <lineage>
        <taxon>Eukaryota</taxon>
        <taxon>Metazoa</taxon>
        <taxon>Ecdysozoa</taxon>
        <taxon>Arthropoda</taxon>
        <taxon>Hexapoda</taxon>
        <taxon>Insecta</taxon>
        <taxon>Pterygota</taxon>
        <taxon>Neoptera</taxon>
        <taxon>Endopterygota</taxon>
        <taxon>Diptera</taxon>
        <taxon>Brachycera</taxon>
        <taxon>Muscomorpha</taxon>
        <taxon>Ephydroidea</taxon>
        <taxon>Drosophilidae</taxon>
        <taxon>Drosophila</taxon>
        <taxon>Sophophora</taxon>
    </lineage>
</organism>
<accession>B4HSL3</accession>
<sequence length="411" mass="46460">MKMVLSQRQREELNQAIADYLGSNGYADSLETFRKEADLSTEVEKKFGGLLEKKWTSVIRLQKKVMELEAKLTEAEKEVIEGAPTKNKRTPGEWIPRPPEKFSLTGHRASITRVIFHPIFALMVSASEDATIRIWDFETGEYERSLKGHTDSVQDVAFDAQGKLLASCSADLSIKLWDFQQSYECIKTMHGHDHNVSSVAFVPAGDYVLSASRDRTIKMWEVATGYCVKTYTGHREWVRMVRVHIEGSIFATCSNDQTIRVWLTNSKDCKVELRDHEHTVECIAWAPEAAASAINEAAGADNKKGHHQGPFLASGSRDKTIRIWDVSVGLCLLTLSGHDNWVRGLAFHPGGKYLVSASDDKTIRVWDLRNKRCMKTLYAHQHFCTSIDFHKAHPYVISGSVDQTVKVWECR</sequence>
<evidence type="ECO:0000255" key="1">
    <source>
        <dbReference type="HAMAP-Rule" id="MF_03141"/>
    </source>
</evidence>
<protein>
    <recommendedName>
        <fullName evidence="1">Lissencephaly-1 homolog</fullName>
    </recommendedName>
</protein>
<proteinExistence type="inferred from homology"/>